<sequence>MQVTPIAMEDASFAYRLGTECTEDVVARLATLGASSYLVVADTTVAGLYGHDLTARIDKEAGPAHLLTHESGEVHKDLTTVSVLAEQALERGADRRSVVVALGGGVTGNITGLMASLLFRGIRLVHVPTTVVAMLDSVLSLKQAVNATFGKNLVGTFYQPVEVLADTAFLRTLPPREIRSGLGEVVKNALAIRPAMLDRLGDALRADARYDDETLRWIIAESLTAKADVTRDDKHERRTGLVLEYGHTAGHAIEHASRGEVAHGAGVAVGMTIAAEVSRRLGHAGPDFVALHRELVAAAGVEPAVPAHVDPALVKNWLAYDNKRGYLDSPPGHTPMVLLSAPGEVLHTGPMPLVPVPLALLEEAVDEAARRGRDAAPAAAYVGPPAAGPLP</sequence>
<organism>
    <name type="scientific">Streptomyces ribosidificus</name>
    <dbReference type="NCBI Taxonomy" id="80859"/>
    <lineage>
        <taxon>Bacteria</taxon>
        <taxon>Bacillati</taxon>
        <taxon>Actinomycetota</taxon>
        <taxon>Actinomycetes</taxon>
        <taxon>Kitasatosporales</taxon>
        <taxon>Streptomycetaceae</taxon>
        <taxon>Streptomyces</taxon>
    </lineage>
</organism>
<evidence type="ECO:0000250" key="1">
    <source>
        <dbReference type="UniProtKB" id="Q9S5E2"/>
    </source>
</evidence>
<evidence type="ECO:0000269" key="2">
    <source>
    </source>
</evidence>
<evidence type="ECO:0000305" key="3"/>
<accession>Q4R0W3</accession>
<dbReference type="EC" id="4.2.3.124"/>
<dbReference type="EMBL" id="AJ748131">
    <property type="protein sequence ID" value="CAG34718.1"/>
    <property type="molecule type" value="Genomic_DNA"/>
</dbReference>
<dbReference type="EMBL" id="AJ744850">
    <property type="protein sequence ID" value="CAG34037.1"/>
    <property type="molecule type" value="Genomic_DNA"/>
</dbReference>
<dbReference type="SMR" id="Q4R0W3"/>
<dbReference type="UniPathway" id="UPA00907">
    <property type="reaction ID" value="UER00921"/>
</dbReference>
<dbReference type="UniPathway" id="UPA00972"/>
<dbReference type="GO" id="GO:0003856">
    <property type="term" value="F:3-dehydroquinate synthase activity"/>
    <property type="evidence" value="ECO:0007669"/>
    <property type="project" value="TreeGrafter"/>
</dbReference>
<dbReference type="GO" id="GO:0046872">
    <property type="term" value="F:metal ion binding"/>
    <property type="evidence" value="ECO:0007669"/>
    <property type="project" value="UniProtKB-KW"/>
</dbReference>
<dbReference type="GO" id="GO:0017000">
    <property type="term" value="P:antibiotic biosynthetic process"/>
    <property type="evidence" value="ECO:0007669"/>
    <property type="project" value="UniProtKB-KW"/>
</dbReference>
<dbReference type="GO" id="GO:0009073">
    <property type="term" value="P:aromatic amino acid family biosynthetic process"/>
    <property type="evidence" value="ECO:0007669"/>
    <property type="project" value="InterPro"/>
</dbReference>
<dbReference type="CDD" id="cd08197">
    <property type="entry name" value="DOIS"/>
    <property type="match status" value="1"/>
</dbReference>
<dbReference type="Gene3D" id="3.40.50.1970">
    <property type="match status" value="1"/>
</dbReference>
<dbReference type="Gene3D" id="1.20.1090.10">
    <property type="entry name" value="Dehydroquinate synthase-like - alpha domain"/>
    <property type="match status" value="1"/>
</dbReference>
<dbReference type="InterPro" id="IPR050071">
    <property type="entry name" value="Dehydroquinate_synthase"/>
</dbReference>
<dbReference type="InterPro" id="IPR030963">
    <property type="entry name" value="DHQ_synth_fam"/>
</dbReference>
<dbReference type="InterPro" id="IPR030960">
    <property type="entry name" value="DHQS/DOIS_N"/>
</dbReference>
<dbReference type="InterPro" id="IPR056179">
    <property type="entry name" value="DHQS_C"/>
</dbReference>
<dbReference type="PANTHER" id="PTHR43622">
    <property type="entry name" value="3-DEHYDROQUINATE SYNTHASE"/>
    <property type="match status" value="1"/>
</dbReference>
<dbReference type="PANTHER" id="PTHR43622:SF1">
    <property type="entry name" value="3-DEHYDROQUINATE SYNTHASE"/>
    <property type="match status" value="1"/>
</dbReference>
<dbReference type="Pfam" id="PF01761">
    <property type="entry name" value="DHQ_synthase"/>
    <property type="match status" value="1"/>
</dbReference>
<dbReference type="Pfam" id="PF24621">
    <property type="entry name" value="DHQS_C"/>
    <property type="match status" value="1"/>
</dbReference>
<dbReference type="PIRSF" id="PIRSF001455">
    <property type="entry name" value="DHQ_synth"/>
    <property type="match status" value="1"/>
</dbReference>
<dbReference type="SUPFAM" id="SSF56796">
    <property type="entry name" value="Dehydroquinate synthase-like"/>
    <property type="match status" value="1"/>
</dbReference>
<reference key="1">
    <citation type="journal article" date="2005" name="Mol. Cells">
        <title>The ribostamycin biosynthetic gene cluster in Streptomyces ribosidificus: comparison with butirosin biosynthesis.</title>
        <authorList>
            <person name="Subba B."/>
            <person name="Kharel M.K."/>
            <person name="Lee H.C."/>
            <person name="Liou K."/>
            <person name="Kim B.-G."/>
            <person name="Sohng J.K."/>
        </authorList>
    </citation>
    <scope>NUCLEOTIDE SEQUENCE [GENOMIC DNA]</scope>
    <scope>FUNCTION</scope>
    <source>
        <strain>ATCC 21294 / JCM 4923 / NBRC 13796 / NRRL B-11466</strain>
    </source>
</reference>
<reference key="2">
    <citation type="submission" date="2004-06" db="EMBL/GenBank/DDBJ databases">
        <title>Analysis and comparison of biosynthetic gene clusters for the 2-deoxy-inosamine containing aminoglycoside antibiotics ribostamycin, neomycin, lividomycin, paromomycin and butirosin.</title>
        <authorList>
            <person name="Aboshanab K.M.A."/>
            <person name="Schmidt-Beissner H."/>
            <person name="Wehmeier U.F."/>
            <person name="Piepersberg W."/>
            <person name="Welzel K."/>
            <person name="Vente A."/>
        </authorList>
    </citation>
    <scope>NUCLEOTIDE SEQUENCE [GENOMIC DNA]</scope>
    <source>
        <strain>ATCC 21294 / JCM 4923 / NBRC 13796 / NRRL B-11466</strain>
    </source>
</reference>
<comment type="function">
    <text evidence="2">Catalyzes the intramolecular carbocycle formation from D-glucose-6-phosphate to 2-deoxy-scyllo-inosose (DOI).</text>
</comment>
<comment type="catalytic activity">
    <reaction>
        <text>D-glucose 6-phosphate = 2-deoxy-L-scyllo-inosose + phosphate</text>
        <dbReference type="Rhea" id="RHEA:33071"/>
        <dbReference type="ChEBI" id="CHEBI:43474"/>
        <dbReference type="ChEBI" id="CHEBI:61548"/>
        <dbReference type="ChEBI" id="CHEBI:64796"/>
        <dbReference type="EC" id="4.2.3.124"/>
    </reaction>
</comment>
<comment type="cofactor">
    <cofactor evidence="1">
        <name>NAD(+)</name>
        <dbReference type="ChEBI" id="CHEBI:57540"/>
    </cofactor>
</comment>
<comment type="cofactor">
    <cofactor evidence="1">
        <name>Co(2+)</name>
        <dbReference type="ChEBI" id="CHEBI:48828"/>
    </cofactor>
    <text evidence="1">Binds 1 Co(2+) ion per subunit.</text>
</comment>
<comment type="pathway">
    <text>Metabolic intermediate biosynthesis; 2-deoxystreptamine biosynthesis; 2-deoxystreptamine from D-glucose 6-phosphate: step 1/4.</text>
</comment>
<comment type="pathway">
    <text>Antibiotic biosynthesis; ribostamycin biosynthesis.</text>
</comment>
<comment type="similarity">
    <text evidence="3">Belongs to the sugar phosphate cyclases superfamily. DOI synthase family.</text>
</comment>
<gene>
    <name type="primary">rbmA</name>
    <name type="synonym">ribC</name>
</gene>
<proteinExistence type="inferred from homology"/>
<feature type="chain" id="PRO_0000234039" description="2-deoxy-scyllo-inosose synthase">
    <location>
        <begin position="1"/>
        <end position="391"/>
    </location>
</feature>
<feature type="active site" evidence="1">
    <location>
        <position position="142"/>
    </location>
</feature>
<feature type="active site" evidence="1">
    <location>
        <position position="244"/>
    </location>
</feature>
<feature type="binding site" evidence="1">
    <location>
        <position position="42"/>
    </location>
    <ligand>
        <name>NAD(+)</name>
        <dbReference type="ChEBI" id="CHEBI:57540"/>
    </ligand>
</feature>
<feature type="binding site" evidence="1">
    <location>
        <begin position="73"/>
        <end position="76"/>
    </location>
    <ligand>
        <name>NAD(+)</name>
        <dbReference type="ChEBI" id="CHEBI:57540"/>
    </ligand>
</feature>
<feature type="binding site" evidence="1">
    <location>
        <begin position="105"/>
        <end position="109"/>
    </location>
    <ligand>
        <name>NAD(+)</name>
        <dbReference type="ChEBI" id="CHEBI:57540"/>
    </ligand>
</feature>
<feature type="binding site" evidence="1">
    <location>
        <begin position="129"/>
        <end position="130"/>
    </location>
    <ligand>
        <name>NAD(+)</name>
        <dbReference type="ChEBI" id="CHEBI:57540"/>
    </ligand>
</feature>
<feature type="binding site" evidence="1">
    <location>
        <begin position="140"/>
        <end position="142"/>
    </location>
    <ligand>
        <name>NAD(+)</name>
        <dbReference type="ChEBI" id="CHEBI:57540"/>
    </ligand>
</feature>
<feature type="binding site" evidence="1">
    <location>
        <begin position="151"/>
        <end position="152"/>
    </location>
    <ligand>
        <name>NAD(+)</name>
        <dbReference type="ChEBI" id="CHEBI:57540"/>
    </ligand>
</feature>
<feature type="binding site" evidence="1">
    <location>
        <position position="184"/>
    </location>
    <ligand>
        <name>Co(2+)</name>
        <dbReference type="ChEBI" id="CHEBI:48828"/>
    </ligand>
</feature>
<feature type="binding site" evidence="1">
    <location>
        <position position="247"/>
    </location>
    <ligand>
        <name>Co(2+)</name>
        <dbReference type="ChEBI" id="CHEBI:48828"/>
    </ligand>
</feature>
<feature type="binding site" evidence="1">
    <location>
        <position position="263"/>
    </location>
    <ligand>
        <name>Co(2+)</name>
        <dbReference type="ChEBI" id="CHEBI:48828"/>
    </ligand>
</feature>
<protein>
    <recommendedName>
        <fullName>2-deoxy-scyllo-inosose synthase</fullName>
        <shortName>DOI synthase</shortName>
        <shortName>DOIS</shortName>
        <ecNumber>4.2.3.124</ecNumber>
    </recommendedName>
</protein>
<name>DOIS_STRRI</name>
<keyword id="KW-0045">Antibiotic biosynthesis</keyword>
<keyword id="KW-0170">Cobalt</keyword>
<keyword id="KW-0456">Lyase</keyword>
<keyword id="KW-0479">Metal-binding</keyword>
<keyword id="KW-0520">NAD</keyword>